<organismHost>
    <name type="scientific">Aedes vexans</name>
    <name type="common">Inland floodwater mosquito</name>
    <name type="synonym">Culex vexans</name>
    <dbReference type="NCBI Taxonomy" id="7163"/>
</organismHost>
<organismHost>
    <name type="scientific">Culex territans</name>
    <dbReference type="NCBI Taxonomy" id="42431"/>
</organismHost>
<organismHost>
    <name type="scientific">Culiseta annulata</name>
    <dbReference type="NCBI Taxonomy" id="332058"/>
</organismHost>
<organismHost>
    <name type="scientific">Ochlerotatus sollicitans</name>
    <name type="common">eastern saltmarsh mosquito</name>
    <dbReference type="NCBI Taxonomy" id="310513"/>
</organismHost>
<organismHost>
    <name type="scientific">Ochlerotatus taeniorhynchus</name>
    <name type="common">Black salt marsh mosquito</name>
    <name type="synonym">Aedes taeniorhynchus</name>
    <dbReference type="NCBI Taxonomy" id="329105"/>
</organismHost>
<organismHost>
    <name type="scientific">Psorophora ferox</name>
    <dbReference type="NCBI Taxonomy" id="7183"/>
</organismHost>
<evidence type="ECO:0000255" key="1"/>
<evidence type="ECO:0000256" key="2">
    <source>
        <dbReference type="SAM" id="MobiDB-lite"/>
    </source>
</evidence>
<evidence type="ECO:0000305" key="3"/>
<dbReference type="EMBL" id="DQ643392">
    <property type="protein sequence ID" value="ABF82103.1"/>
    <property type="molecule type" value="Genomic_DNA"/>
</dbReference>
<dbReference type="RefSeq" id="YP_654645.1">
    <property type="nucleotide sequence ID" value="NC_008187.1"/>
</dbReference>
<dbReference type="SMR" id="Q196Y7"/>
<dbReference type="KEGG" id="vg:4156284"/>
<dbReference type="OrthoDB" id="19010at10239"/>
<dbReference type="Proteomes" id="UP000001358">
    <property type="component" value="Genome"/>
</dbReference>
<dbReference type="GO" id="GO:0016020">
    <property type="term" value="C:membrane"/>
    <property type="evidence" value="ECO:0007669"/>
    <property type="project" value="UniProtKB-SubCell"/>
</dbReference>
<name>073R_IIV3</name>
<accession>Q196Y7</accession>
<comment type="subcellular location">
    <subcellularLocation>
        <location evidence="3">Membrane</location>
        <topology evidence="3">Single-pass membrane protein</topology>
    </subcellularLocation>
</comment>
<sequence>MDNAPKTFKVDRHKQLVPLNPGLETNFVCSFEIKSLDGKPFQTTIVEQGQIKPTQYREVDDGFISGQLEGDGTPRSYFLVLRAQEPCECTVKIVLSPKQQVQPHQQTHQQSQQTHNKTVANSGDPPPPPPSQPNKFLKPKWIVGMVIGVVVLYLLYRYRAQLMDKLNLGSKTPFSKN</sequence>
<feature type="chain" id="PRO_0000377803" description="Uncharacterized protein 073R">
    <location>
        <begin position="1"/>
        <end position="177"/>
    </location>
</feature>
<feature type="transmembrane region" description="Helical" evidence="1">
    <location>
        <begin position="141"/>
        <end position="158"/>
    </location>
</feature>
<feature type="region of interest" description="Disordered" evidence="2">
    <location>
        <begin position="100"/>
        <end position="135"/>
    </location>
</feature>
<feature type="compositionally biased region" description="Low complexity" evidence="2">
    <location>
        <begin position="100"/>
        <end position="115"/>
    </location>
</feature>
<proteinExistence type="predicted"/>
<organism>
    <name type="scientific">Invertebrate iridescent virus 3</name>
    <name type="common">IIV-3</name>
    <name type="synonym">Mosquito iridescent virus</name>
    <dbReference type="NCBI Taxonomy" id="345201"/>
    <lineage>
        <taxon>Viruses</taxon>
        <taxon>Varidnaviria</taxon>
        <taxon>Bamfordvirae</taxon>
        <taxon>Nucleocytoviricota</taxon>
        <taxon>Megaviricetes</taxon>
        <taxon>Pimascovirales</taxon>
        <taxon>Iridoviridae</taxon>
        <taxon>Betairidovirinae</taxon>
        <taxon>Chloriridovirus</taxon>
    </lineage>
</organism>
<keyword id="KW-0472">Membrane</keyword>
<keyword id="KW-1185">Reference proteome</keyword>
<keyword id="KW-0812">Transmembrane</keyword>
<keyword id="KW-1133">Transmembrane helix</keyword>
<reference key="1">
    <citation type="journal article" date="2006" name="J. Virol.">
        <title>Genome of invertebrate iridescent virus type 3 (mosquito iridescent virus).</title>
        <authorList>
            <person name="Delhon G."/>
            <person name="Tulman E.R."/>
            <person name="Afonso C.L."/>
            <person name="Lu Z."/>
            <person name="Becnel J.J."/>
            <person name="Moser B.A."/>
            <person name="Kutish G.F."/>
            <person name="Rock D.L."/>
        </authorList>
    </citation>
    <scope>NUCLEOTIDE SEQUENCE [LARGE SCALE GENOMIC DNA]</scope>
</reference>
<gene>
    <name type="ORF">IIV3-073R</name>
</gene>
<protein>
    <recommendedName>
        <fullName>Uncharacterized protein 073R</fullName>
    </recommendedName>
</protein>